<feature type="chain" id="PRO_1000063094" description="Imidazole glycerol phosphate synthase subunit HisF">
    <location>
        <begin position="1"/>
        <end position="261"/>
    </location>
</feature>
<feature type="active site" evidence="1">
    <location>
        <position position="16"/>
    </location>
</feature>
<feature type="active site" evidence="1">
    <location>
        <position position="135"/>
    </location>
</feature>
<sequence>MSANSDVATRVIPCLDVDNGRVVKGVNFENLRDAGDPVELAAAYDAEGADELTFLDVTASSSGRSTMLEVVRRTAEQVFIPLTVGGGVRSVDDVDVLLRAGADKVSVNTAAIARPELLAEMARQFGSQCIVLSVDARTVPKGEQPTPSGWEVTTHGGRRGTGIDAIEWATRGAELGVGEILLNSMDRDGTKAGFDLKMLSAVRAAVSVPVIASGGAGAVEHFAPAVQAGADAVLAASVFHFRELTVAEVKASMKAAGITVR</sequence>
<organism>
    <name type="scientific">Mycolicibacterium smegmatis (strain ATCC 700084 / mc(2)155)</name>
    <name type="common">Mycobacterium smegmatis</name>
    <dbReference type="NCBI Taxonomy" id="246196"/>
    <lineage>
        <taxon>Bacteria</taxon>
        <taxon>Bacillati</taxon>
        <taxon>Actinomycetota</taxon>
        <taxon>Actinomycetes</taxon>
        <taxon>Mycobacteriales</taxon>
        <taxon>Mycobacteriaceae</taxon>
        <taxon>Mycolicibacterium</taxon>
    </lineage>
</organism>
<comment type="function">
    <text evidence="1">IGPS catalyzes the conversion of PRFAR and glutamine to IGP, AICAR and glutamate. The HisF subunit catalyzes the cyclization activity that produces IGP and AICAR from PRFAR using the ammonia provided by the HisH subunit.</text>
</comment>
<comment type="catalytic activity">
    <reaction evidence="1">
        <text>5-[(5-phospho-1-deoxy-D-ribulos-1-ylimino)methylamino]-1-(5-phospho-beta-D-ribosyl)imidazole-4-carboxamide + L-glutamine = D-erythro-1-(imidazol-4-yl)glycerol 3-phosphate + 5-amino-1-(5-phospho-beta-D-ribosyl)imidazole-4-carboxamide + L-glutamate + H(+)</text>
        <dbReference type="Rhea" id="RHEA:24793"/>
        <dbReference type="ChEBI" id="CHEBI:15378"/>
        <dbReference type="ChEBI" id="CHEBI:29985"/>
        <dbReference type="ChEBI" id="CHEBI:58278"/>
        <dbReference type="ChEBI" id="CHEBI:58359"/>
        <dbReference type="ChEBI" id="CHEBI:58475"/>
        <dbReference type="ChEBI" id="CHEBI:58525"/>
        <dbReference type="EC" id="4.3.2.10"/>
    </reaction>
</comment>
<comment type="pathway">
    <text evidence="1">Amino-acid biosynthesis; L-histidine biosynthesis; L-histidine from 5-phospho-alpha-D-ribose 1-diphosphate: step 5/9.</text>
</comment>
<comment type="subunit">
    <text evidence="1">Heterodimer of HisH and HisF.</text>
</comment>
<comment type="subcellular location">
    <subcellularLocation>
        <location evidence="1">Cytoplasm</location>
    </subcellularLocation>
</comment>
<comment type="similarity">
    <text evidence="1">Belongs to the HisA/HisF family.</text>
</comment>
<gene>
    <name evidence="1" type="primary">hisF</name>
    <name type="ordered locus">MSMEG_3211</name>
    <name type="ordered locus">MSMEI_3129</name>
</gene>
<accession>A0QX87</accession>
<accession>I7FLI4</accession>
<name>HIS6_MYCS2</name>
<evidence type="ECO:0000255" key="1">
    <source>
        <dbReference type="HAMAP-Rule" id="MF_01013"/>
    </source>
</evidence>
<protein>
    <recommendedName>
        <fullName evidence="1">Imidazole glycerol phosphate synthase subunit HisF</fullName>
        <ecNumber evidence="1">4.3.2.10</ecNumber>
    </recommendedName>
    <alternativeName>
        <fullName evidence="1">IGP synthase cyclase subunit</fullName>
    </alternativeName>
    <alternativeName>
        <fullName evidence="1">IGP synthase subunit HisF</fullName>
    </alternativeName>
    <alternativeName>
        <fullName evidence="1">ImGP synthase subunit HisF</fullName>
        <shortName evidence="1">IGPS subunit HisF</shortName>
    </alternativeName>
</protein>
<dbReference type="EC" id="4.3.2.10" evidence="1"/>
<dbReference type="EMBL" id="CP000480">
    <property type="protein sequence ID" value="ABK70435.1"/>
    <property type="molecule type" value="Genomic_DNA"/>
</dbReference>
<dbReference type="EMBL" id="CP001663">
    <property type="protein sequence ID" value="AFP39593.1"/>
    <property type="molecule type" value="Genomic_DNA"/>
</dbReference>
<dbReference type="RefSeq" id="WP_011728898.1">
    <property type="nucleotide sequence ID" value="NZ_SIJM01000015.1"/>
</dbReference>
<dbReference type="RefSeq" id="YP_887525.1">
    <property type="nucleotide sequence ID" value="NC_008596.1"/>
</dbReference>
<dbReference type="SMR" id="A0QX87"/>
<dbReference type="STRING" id="246196.MSMEG_3211"/>
<dbReference type="PaxDb" id="246196-MSMEI_3129"/>
<dbReference type="GeneID" id="93457980"/>
<dbReference type="KEGG" id="msb:LJ00_15965"/>
<dbReference type="KEGG" id="msg:MSMEI_3129"/>
<dbReference type="KEGG" id="msm:MSMEG_3211"/>
<dbReference type="PATRIC" id="fig|246196.19.peg.3173"/>
<dbReference type="eggNOG" id="COG0107">
    <property type="taxonomic scope" value="Bacteria"/>
</dbReference>
<dbReference type="OrthoDB" id="9781903at2"/>
<dbReference type="UniPathway" id="UPA00031">
    <property type="reaction ID" value="UER00010"/>
</dbReference>
<dbReference type="Proteomes" id="UP000000757">
    <property type="component" value="Chromosome"/>
</dbReference>
<dbReference type="Proteomes" id="UP000006158">
    <property type="component" value="Chromosome"/>
</dbReference>
<dbReference type="GO" id="GO:0005737">
    <property type="term" value="C:cytoplasm"/>
    <property type="evidence" value="ECO:0007669"/>
    <property type="project" value="UniProtKB-SubCell"/>
</dbReference>
<dbReference type="GO" id="GO:0000107">
    <property type="term" value="F:imidazoleglycerol-phosphate synthase activity"/>
    <property type="evidence" value="ECO:0007669"/>
    <property type="project" value="UniProtKB-UniRule"/>
</dbReference>
<dbReference type="GO" id="GO:0016829">
    <property type="term" value="F:lyase activity"/>
    <property type="evidence" value="ECO:0007669"/>
    <property type="project" value="UniProtKB-KW"/>
</dbReference>
<dbReference type="GO" id="GO:0000105">
    <property type="term" value="P:L-histidine biosynthetic process"/>
    <property type="evidence" value="ECO:0007669"/>
    <property type="project" value="UniProtKB-UniRule"/>
</dbReference>
<dbReference type="CDD" id="cd04731">
    <property type="entry name" value="HisF"/>
    <property type="match status" value="1"/>
</dbReference>
<dbReference type="FunFam" id="3.20.20.70:FF:000006">
    <property type="entry name" value="Imidazole glycerol phosphate synthase subunit HisF"/>
    <property type="match status" value="1"/>
</dbReference>
<dbReference type="Gene3D" id="3.20.20.70">
    <property type="entry name" value="Aldolase class I"/>
    <property type="match status" value="1"/>
</dbReference>
<dbReference type="HAMAP" id="MF_01013">
    <property type="entry name" value="HisF"/>
    <property type="match status" value="1"/>
</dbReference>
<dbReference type="InterPro" id="IPR013785">
    <property type="entry name" value="Aldolase_TIM"/>
</dbReference>
<dbReference type="InterPro" id="IPR006062">
    <property type="entry name" value="His_biosynth"/>
</dbReference>
<dbReference type="InterPro" id="IPR004651">
    <property type="entry name" value="HisF"/>
</dbReference>
<dbReference type="InterPro" id="IPR050064">
    <property type="entry name" value="IGPS_HisA/HisF"/>
</dbReference>
<dbReference type="InterPro" id="IPR011060">
    <property type="entry name" value="RibuloseP-bd_barrel"/>
</dbReference>
<dbReference type="NCBIfam" id="TIGR00735">
    <property type="entry name" value="hisF"/>
    <property type="match status" value="1"/>
</dbReference>
<dbReference type="PANTHER" id="PTHR21235:SF2">
    <property type="entry name" value="IMIDAZOLE GLYCEROL PHOSPHATE SYNTHASE HISHF"/>
    <property type="match status" value="1"/>
</dbReference>
<dbReference type="PANTHER" id="PTHR21235">
    <property type="entry name" value="IMIDAZOLE GLYCEROL PHOSPHATE SYNTHASE SUBUNIT HISF/H IGP SYNTHASE SUBUNIT HISF/H"/>
    <property type="match status" value="1"/>
</dbReference>
<dbReference type="Pfam" id="PF00977">
    <property type="entry name" value="His_biosynth"/>
    <property type="match status" value="1"/>
</dbReference>
<dbReference type="SUPFAM" id="SSF51366">
    <property type="entry name" value="Ribulose-phoshate binding barrel"/>
    <property type="match status" value="1"/>
</dbReference>
<keyword id="KW-0028">Amino-acid biosynthesis</keyword>
<keyword id="KW-0963">Cytoplasm</keyword>
<keyword id="KW-0368">Histidine biosynthesis</keyword>
<keyword id="KW-0456">Lyase</keyword>
<keyword id="KW-1185">Reference proteome</keyword>
<reference key="1">
    <citation type="submission" date="2006-10" db="EMBL/GenBank/DDBJ databases">
        <authorList>
            <person name="Fleischmann R.D."/>
            <person name="Dodson R.J."/>
            <person name="Haft D.H."/>
            <person name="Merkel J.S."/>
            <person name="Nelson W.C."/>
            <person name="Fraser C.M."/>
        </authorList>
    </citation>
    <scope>NUCLEOTIDE SEQUENCE [LARGE SCALE GENOMIC DNA]</scope>
    <source>
        <strain>ATCC 700084 / mc(2)155</strain>
    </source>
</reference>
<reference key="2">
    <citation type="journal article" date="2007" name="Genome Biol.">
        <title>Interrupted coding sequences in Mycobacterium smegmatis: authentic mutations or sequencing errors?</title>
        <authorList>
            <person name="Deshayes C."/>
            <person name="Perrodou E."/>
            <person name="Gallien S."/>
            <person name="Euphrasie D."/>
            <person name="Schaeffer C."/>
            <person name="Van-Dorsselaer A."/>
            <person name="Poch O."/>
            <person name="Lecompte O."/>
            <person name="Reyrat J.-M."/>
        </authorList>
    </citation>
    <scope>NUCLEOTIDE SEQUENCE [LARGE SCALE GENOMIC DNA]</scope>
    <source>
        <strain>ATCC 700084 / mc(2)155</strain>
    </source>
</reference>
<reference key="3">
    <citation type="journal article" date="2009" name="Genome Res.">
        <title>Ortho-proteogenomics: multiple proteomes investigation through orthology and a new MS-based protocol.</title>
        <authorList>
            <person name="Gallien S."/>
            <person name="Perrodou E."/>
            <person name="Carapito C."/>
            <person name="Deshayes C."/>
            <person name="Reyrat J.-M."/>
            <person name="Van Dorsselaer A."/>
            <person name="Poch O."/>
            <person name="Schaeffer C."/>
            <person name="Lecompte O."/>
        </authorList>
    </citation>
    <scope>NUCLEOTIDE SEQUENCE [LARGE SCALE GENOMIC DNA]</scope>
    <source>
        <strain>ATCC 700084 / mc(2)155</strain>
    </source>
</reference>
<proteinExistence type="inferred from homology"/>